<reference key="1">
    <citation type="journal article" date="2000" name="DNA Res.">
        <title>Structural analysis of Arabidopsis thaliana chromosome 5. X. Sequence features of the regions of 3,076,755 bp covered by sixty P1 and TAC clones.</title>
        <authorList>
            <person name="Sato S."/>
            <person name="Nakamura Y."/>
            <person name="Kaneko T."/>
            <person name="Katoh T."/>
            <person name="Asamizu E."/>
            <person name="Kotani H."/>
            <person name="Tabata S."/>
        </authorList>
    </citation>
    <scope>NUCLEOTIDE SEQUENCE [LARGE SCALE GENOMIC DNA]</scope>
    <source>
        <strain>cv. Columbia</strain>
    </source>
</reference>
<reference key="2">
    <citation type="journal article" date="2017" name="Plant J.">
        <title>Araport11: a complete reannotation of the Arabidopsis thaliana reference genome.</title>
        <authorList>
            <person name="Cheng C.Y."/>
            <person name="Krishnakumar V."/>
            <person name="Chan A.P."/>
            <person name="Thibaud-Nissen F."/>
            <person name="Schobel S."/>
            <person name="Town C.D."/>
        </authorList>
    </citation>
    <scope>GENOME REANNOTATION</scope>
    <source>
        <strain>cv. Columbia</strain>
    </source>
</reference>
<reference key="3">
    <citation type="journal article" date="2004" name="Carbohydr. Res.">
        <title>Pectin methylesterases: sequence-structural features and phylogenetic relationships.</title>
        <authorList>
            <person name="Markovic O."/>
            <person name="Janecek S."/>
        </authorList>
    </citation>
    <scope>GENE FAMILY</scope>
    <scope>NOMENCLATURE</scope>
</reference>
<reference key="4">
    <citation type="journal article" date="2006" name="Planta">
        <title>Comprehensive expression profiling of the pectin methylesterase gene family during silique development in Arabidopsis thaliana.</title>
        <authorList>
            <person name="Louvet R."/>
            <person name="Cavel E."/>
            <person name="Gutierrez L."/>
            <person name="Guenin S."/>
            <person name="Roger D."/>
            <person name="Gillet F."/>
            <person name="Guerineau F."/>
            <person name="Pelloux J."/>
        </authorList>
    </citation>
    <scope>TISSUE SPECIFICITY</scope>
    <scope>DEVELOPMENTAL STAGE</scope>
</reference>
<feature type="signal peptide" evidence="2">
    <location>
        <begin position="1"/>
        <end position="30"/>
    </location>
</feature>
<feature type="chain" id="PRO_0000370180" description="Probable pectinesterase/pectinesterase inhibitor 59">
    <location>
        <begin position="31"/>
        <end position="536"/>
    </location>
</feature>
<feature type="region of interest" description="Pectinesterase inhibitor 59">
    <location>
        <begin position="31"/>
        <end position="183"/>
    </location>
</feature>
<feature type="region of interest" description="Pectinesterase 59">
    <location>
        <begin position="221"/>
        <end position="522"/>
    </location>
</feature>
<feature type="active site" description="Proton donor; for pectinesterase activity" evidence="3">
    <location>
        <position position="351"/>
    </location>
</feature>
<feature type="active site" description="Nucleophile; for pectinesterase activity" evidence="3">
    <location>
        <position position="372"/>
    </location>
</feature>
<feature type="binding site" evidence="1">
    <location>
        <position position="298"/>
    </location>
    <ligand>
        <name>substrate</name>
        <note>for pectinesterase activity</note>
    </ligand>
</feature>
<feature type="binding site" evidence="1">
    <location>
        <position position="328"/>
    </location>
    <ligand>
        <name>substrate</name>
        <note>for pectinesterase activity</note>
    </ligand>
</feature>
<feature type="binding site" evidence="1">
    <location>
        <position position="440"/>
    </location>
    <ligand>
        <name>substrate</name>
        <note>for pectinesterase activity</note>
    </ligand>
</feature>
<feature type="binding site" evidence="1">
    <location>
        <position position="442"/>
    </location>
    <ligand>
        <name>substrate</name>
        <note>for pectinesterase activity</note>
    </ligand>
</feature>
<feature type="site" description="Transition state stabilizer" evidence="1">
    <location>
        <position position="350"/>
    </location>
</feature>
<feature type="glycosylation site" description="N-linked (GlcNAc...) asparagine" evidence="2">
    <location>
        <position position="33"/>
    </location>
</feature>
<feature type="glycosylation site" description="N-linked (GlcNAc...) asparagine" evidence="2">
    <location>
        <position position="91"/>
    </location>
</feature>
<feature type="glycosylation site" description="N-linked (GlcNAc...) asparagine" evidence="2">
    <location>
        <position position="116"/>
    </location>
</feature>
<feature type="glycosylation site" description="N-linked (GlcNAc...) asparagine" evidence="2">
    <location>
        <position position="159"/>
    </location>
</feature>
<feature type="glycosylation site" description="N-linked (GlcNAc...) asparagine" evidence="2">
    <location>
        <position position="195"/>
    </location>
</feature>
<feature type="disulfide bond" evidence="1">
    <location>
        <begin position="365"/>
        <end position="385"/>
    </location>
</feature>
<comment type="function">
    <text evidence="1">Acts in the modification of cell walls via demethylesterification of cell wall pectin.</text>
</comment>
<comment type="catalytic activity">
    <reaction>
        <text>[(1-&gt;4)-alpha-D-galacturonosyl methyl ester](n) + n H2O = [(1-&gt;4)-alpha-D-galacturonosyl](n) + n methanol + n H(+)</text>
        <dbReference type="Rhea" id="RHEA:22380"/>
        <dbReference type="Rhea" id="RHEA-COMP:14570"/>
        <dbReference type="Rhea" id="RHEA-COMP:14573"/>
        <dbReference type="ChEBI" id="CHEBI:15377"/>
        <dbReference type="ChEBI" id="CHEBI:15378"/>
        <dbReference type="ChEBI" id="CHEBI:17790"/>
        <dbReference type="ChEBI" id="CHEBI:140522"/>
        <dbReference type="ChEBI" id="CHEBI:140523"/>
        <dbReference type="EC" id="3.1.1.11"/>
    </reaction>
</comment>
<comment type="pathway">
    <text>Glycan metabolism; pectin degradation; 2-dehydro-3-deoxy-D-gluconate from pectin: step 1/5.</text>
</comment>
<comment type="subcellular location">
    <subcellularLocation>
        <location evidence="1">Secreted</location>
        <location evidence="1">Cell wall</location>
    </subcellularLocation>
</comment>
<comment type="tissue specificity">
    <text evidence="4">Expressed in siliques.</text>
</comment>
<comment type="developmental stage">
    <text evidence="4">Expressed during late developmental phases of siliques.</text>
</comment>
<comment type="miscellaneous">
    <text>The PMEI region may act as an autoinhibitory domain and prevent untimely PME activity during transport.</text>
</comment>
<comment type="similarity">
    <text evidence="5">In the N-terminal section; belongs to the PMEI family.</text>
</comment>
<comment type="similarity">
    <text evidence="5">In the C-terminal section; belongs to the pectinesterase family.</text>
</comment>
<name>PME59_ARATH</name>
<dbReference type="EC" id="3.1.1.11"/>
<dbReference type="EMBL" id="AB018109">
    <property type="protein sequence ID" value="BAB08665.1"/>
    <property type="molecule type" value="Genomic_DNA"/>
</dbReference>
<dbReference type="EMBL" id="CP002688">
    <property type="protein sequence ID" value="AED96090.1"/>
    <property type="molecule type" value="Genomic_DNA"/>
</dbReference>
<dbReference type="RefSeq" id="NP_199962.1">
    <property type="nucleotide sequence ID" value="NM_124528.3"/>
</dbReference>
<dbReference type="SMR" id="Q9FHN5"/>
<dbReference type="FunCoup" id="Q9FHN5">
    <property type="interactions" value="145"/>
</dbReference>
<dbReference type="STRING" id="3702.Q9FHN5"/>
<dbReference type="GlyCosmos" id="Q9FHN5">
    <property type="glycosylation" value="5 sites, No reported glycans"/>
</dbReference>
<dbReference type="GlyGen" id="Q9FHN5">
    <property type="glycosylation" value="5 sites"/>
</dbReference>
<dbReference type="PaxDb" id="3702-AT5G51490.1"/>
<dbReference type="ProteomicsDB" id="235047"/>
<dbReference type="EnsemblPlants" id="AT5G51490.1">
    <property type="protein sequence ID" value="AT5G51490.1"/>
    <property type="gene ID" value="AT5G51490"/>
</dbReference>
<dbReference type="GeneID" id="835223"/>
<dbReference type="Gramene" id="AT5G51490.1">
    <property type="protein sequence ID" value="AT5G51490.1"/>
    <property type="gene ID" value="AT5G51490"/>
</dbReference>
<dbReference type="KEGG" id="ath:AT5G51490"/>
<dbReference type="Araport" id="AT5G51490"/>
<dbReference type="TAIR" id="AT5G51490"/>
<dbReference type="eggNOG" id="ENOG502QU67">
    <property type="taxonomic scope" value="Eukaryota"/>
</dbReference>
<dbReference type="HOGENOM" id="CLU_012243_9_1_1"/>
<dbReference type="InParanoid" id="Q9FHN5"/>
<dbReference type="OMA" id="TRNRIRW"/>
<dbReference type="PhylomeDB" id="Q9FHN5"/>
<dbReference type="BioCyc" id="ARA:AT5G51490-MONOMER"/>
<dbReference type="UniPathway" id="UPA00545">
    <property type="reaction ID" value="UER00823"/>
</dbReference>
<dbReference type="PRO" id="PR:Q9FHN5"/>
<dbReference type="Proteomes" id="UP000006548">
    <property type="component" value="Chromosome 5"/>
</dbReference>
<dbReference type="ExpressionAtlas" id="Q9FHN5">
    <property type="expression patterns" value="baseline and differential"/>
</dbReference>
<dbReference type="GO" id="GO:0005576">
    <property type="term" value="C:extracellular region"/>
    <property type="evidence" value="ECO:0007669"/>
    <property type="project" value="UniProtKB-KW"/>
</dbReference>
<dbReference type="GO" id="GO:0004857">
    <property type="term" value="F:enzyme inhibitor activity"/>
    <property type="evidence" value="ECO:0007669"/>
    <property type="project" value="InterPro"/>
</dbReference>
<dbReference type="GO" id="GO:0030599">
    <property type="term" value="F:pectinesterase activity"/>
    <property type="evidence" value="ECO:0007669"/>
    <property type="project" value="UniProtKB-EC"/>
</dbReference>
<dbReference type="GO" id="GO:0042545">
    <property type="term" value="P:cell wall modification"/>
    <property type="evidence" value="ECO:0007669"/>
    <property type="project" value="InterPro"/>
</dbReference>
<dbReference type="GO" id="GO:0045490">
    <property type="term" value="P:pectin catabolic process"/>
    <property type="evidence" value="ECO:0007669"/>
    <property type="project" value="UniProtKB-UniPathway"/>
</dbReference>
<dbReference type="CDD" id="cd15798">
    <property type="entry name" value="PMEI-like_3"/>
    <property type="match status" value="1"/>
</dbReference>
<dbReference type="FunFam" id="1.20.140.40:FF:000064">
    <property type="match status" value="1"/>
</dbReference>
<dbReference type="FunFam" id="2.160.20.10:FF:000001">
    <property type="entry name" value="Pectinesterase"/>
    <property type="match status" value="1"/>
</dbReference>
<dbReference type="Gene3D" id="1.20.140.40">
    <property type="entry name" value="Invertase/pectin methylesterase inhibitor family protein"/>
    <property type="match status" value="1"/>
</dbReference>
<dbReference type="Gene3D" id="2.160.20.10">
    <property type="entry name" value="Single-stranded right-handed beta-helix, Pectin lyase-like"/>
    <property type="match status" value="1"/>
</dbReference>
<dbReference type="InterPro" id="IPR035513">
    <property type="entry name" value="Invertase/methylesterase_inhib"/>
</dbReference>
<dbReference type="InterPro" id="IPR012334">
    <property type="entry name" value="Pectin_lyas_fold"/>
</dbReference>
<dbReference type="InterPro" id="IPR011050">
    <property type="entry name" value="Pectin_lyase_fold/virulence"/>
</dbReference>
<dbReference type="InterPro" id="IPR033131">
    <property type="entry name" value="Pectinesterase_Asp_AS"/>
</dbReference>
<dbReference type="InterPro" id="IPR000070">
    <property type="entry name" value="Pectinesterase_cat"/>
</dbReference>
<dbReference type="InterPro" id="IPR006501">
    <property type="entry name" value="Pectinesterase_inhib_dom"/>
</dbReference>
<dbReference type="InterPro" id="IPR018040">
    <property type="entry name" value="Pectinesterase_Tyr_AS"/>
</dbReference>
<dbReference type="NCBIfam" id="TIGR01614">
    <property type="entry name" value="PME_inhib"/>
    <property type="match status" value="1"/>
</dbReference>
<dbReference type="PANTHER" id="PTHR31707">
    <property type="entry name" value="PECTINESTERASE"/>
    <property type="match status" value="1"/>
</dbReference>
<dbReference type="Pfam" id="PF01095">
    <property type="entry name" value="Pectinesterase"/>
    <property type="match status" value="1"/>
</dbReference>
<dbReference type="Pfam" id="PF04043">
    <property type="entry name" value="PMEI"/>
    <property type="match status" value="1"/>
</dbReference>
<dbReference type="SMART" id="SM00856">
    <property type="entry name" value="PMEI"/>
    <property type="match status" value="1"/>
</dbReference>
<dbReference type="SUPFAM" id="SSF51126">
    <property type="entry name" value="Pectin lyase-like"/>
    <property type="match status" value="1"/>
</dbReference>
<dbReference type="SUPFAM" id="SSF101148">
    <property type="entry name" value="Plant invertase/pectin methylesterase inhibitor"/>
    <property type="match status" value="1"/>
</dbReference>
<dbReference type="PROSITE" id="PS00800">
    <property type="entry name" value="PECTINESTERASE_1"/>
    <property type="match status" value="1"/>
</dbReference>
<dbReference type="PROSITE" id="PS00503">
    <property type="entry name" value="PECTINESTERASE_2"/>
    <property type="match status" value="1"/>
</dbReference>
<accession>Q9FHN5</accession>
<gene>
    <name type="primary">PME59</name>
    <name type="synonym">ARATH59</name>
    <name type="ordered locus">At5g51490</name>
    <name type="ORF">K17N15.4</name>
</gene>
<evidence type="ECO:0000250" key="1"/>
<evidence type="ECO:0000255" key="2"/>
<evidence type="ECO:0000255" key="3">
    <source>
        <dbReference type="PROSITE-ProRule" id="PRU10040"/>
    </source>
</evidence>
<evidence type="ECO:0000269" key="4">
    <source>
    </source>
</evidence>
<evidence type="ECO:0000305" key="5"/>
<sequence length="536" mass="58868">MNMMMQKLSILFLHLILLVLLCVHPLTTVADRNSTDWCDKTPYPDPCKCYFKNHNGFQQPTQLSEFRVMLVEAAMDRAISARAELTNSGKNCTDSKKQAVLADCIDLYGDTIMQLNRTLHGVSPKAGAAKSCTDFDAQTWLSTALTNTETCRRGSSDLNVTDFITPIVSNTKISHLISNCLAVNGALLTAGNKGNTTANQKGFPTWLSRKDKRLLRAVRANLVVAKDGSGHFNTVQAAIDVAGRRKVTSGRFVIYVKRGIYQENINVRLNNDDIMLVGDGMRSTIITGGRSVQGGYTTYNSATAGIEGLHFIAKGITFRNTAGPAKGQAVALRSSSDLSIFYKCSIEGYQDTLMVHSQRQFYRECYIYGTVDFIFGNAAAVFQNCLILPRRPLKGQANVITAQGRADPFQNTGISIHNSRILPAPDLKPVVGTVKTYMGRPWMKFSRTVVLQTYLDNVVSPVGWSPWIEGSVFGLDTLFYAEYKNTGPASSTRWRVSWKGFHVLGRASDASAFTVGKFIAGTAWLPRTGIPFTSGL</sequence>
<protein>
    <recommendedName>
        <fullName>Probable pectinesterase/pectinesterase inhibitor 59</fullName>
    </recommendedName>
    <domain>
        <recommendedName>
            <fullName>Pectinesterase inhibitor 59</fullName>
        </recommendedName>
        <alternativeName>
            <fullName>Pectin methylesterase inhibitor 59</fullName>
        </alternativeName>
    </domain>
    <domain>
        <recommendedName>
            <fullName>Pectinesterase 59</fullName>
            <shortName>PE 59</shortName>
            <ecNumber>3.1.1.11</ecNumber>
        </recommendedName>
        <alternativeName>
            <fullName>Pectin methylesterase 59</fullName>
            <shortName>AtPME59</shortName>
        </alternativeName>
    </domain>
</protein>
<organism>
    <name type="scientific">Arabidopsis thaliana</name>
    <name type="common">Mouse-ear cress</name>
    <dbReference type="NCBI Taxonomy" id="3702"/>
    <lineage>
        <taxon>Eukaryota</taxon>
        <taxon>Viridiplantae</taxon>
        <taxon>Streptophyta</taxon>
        <taxon>Embryophyta</taxon>
        <taxon>Tracheophyta</taxon>
        <taxon>Spermatophyta</taxon>
        <taxon>Magnoliopsida</taxon>
        <taxon>eudicotyledons</taxon>
        <taxon>Gunneridae</taxon>
        <taxon>Pentapetalae</taxon>
        <taxon>rosids</taxon>
        <taxon>malvids</taxon>
        <taxon>Brassicales</taxon>
        <taxon>Brassicaceae</taxon>
        <taxon>Camelineae</taxon>
        <taxon>Arabidopsis</taxon>
    </lineage>
</organism>
<keyword id="KW-0063">Aspartyl esterase</keyword>
<keyword id="KW-0134">Cell wall</keyword>
<keyword id="KW-0961">Cell wall biogenesis/degradation</keyword>
<keyword id="KW-1015">Disulfide bond</keyword>
<keyword id="KW-0325">Glycoprotein</keyword>
<keyword id="KW-0378">Hydrolase</keyword>
<keyword id="KW-1185">Reference proteome</keyword>
<keyword id="KW-0964">Secreted</keyword>
<keyword id="KW-0732">Signal</keyword>
<proteinExistence type="evidence at transcript level"/>